<feature type="chain" id="PRO_0000379305" description="ATP-dependent helicase/nuclease subunit A">
    <location>
        <begin position="1"/>
        <end position="1235"/>
    </location>
</feature>
<feature type="domain" description="UvrD-like helicase ATP-binding" evidence="1">
    <location>
        <begin position="4"/>
        <end position="470"/>
    </location>
</feature>
<feature type="domain" description="UvrD-like helicase C-terminal" evidence="1">
    <location>
        <begin position="501"/>
        <end position="795"/>
    </location>
</feature>
<feature type="binding site" evidence="1">
    <location>
        <begin position="25"/>
        <end position="32"/>
    </location>
    <ligand>
        <name>ATP</name>
        <dbReference type="ChEBI" id="CHEBI:30616"/>
    </ligand>
</feature>
<sequence length="1235" mass="141725">MADREYTLSQKQAINSSGHNILVSASAGSGKTSVLVERVIQKIINGEDVDRLLVVTFTEAAASEMKERIRAAIVKKINEVSDIELQNHFSMQLNKLNNANISTLHAFCMSIIRNYYYIIDLDPTFRIMDPTESELLKESVWADLREELYERDEDGKFALLTRNFSSDRSDEGLQDLILELFEFSNANPDPQAWLQQIAKNYEVPSDNVMDMEFIQQLLTEVKTKLMRIYRKDLDLTEQAINGGEPLKNAAEKFQNEVDDLKTIIDSLNGSWDDVQQAVSKMKFAQLPRGKKEEVQEFNAYAKSIRNDFKDEFNTIADKYFKLSSEQMIAVFKDAHDLMMKLIEVQNQFAERFLQEKLTRRSLDFSDLEHFALQIVLDDSEEGQAIRRDFQQKFNEVIVDEYQDINPLQETILTSVASPDPGNMFMVGDVKQSIYAFRMADPSLFISKNNQFKDEEQADERIILAENFRSMRNVDDFTNLIFNQVMDTEVGEIEYDDDAQLQFGAKYYPDEVQNNTEVMIYDDSQTDINDKEATPIISNKNDGQLQMIAQRIQKLFADHTQIYDKKEQKMRDLEYSDIALLHSTGSNNLEIVDTFKKYGIPIQVNNAQDYFQTTEVSIMMALLKIIDNPYQDIPLAAVLRSPMVGLKENELAFLRIGKKNGHYFEALLYFLNEAKLDSNNEFQMQLKTKITHFLEQLDHFSKLARQSTLVDLLWAIYDETGYLDYVGGMPDGPQRQNNLHALYDRAKGYEESSFKGLFQFVRFVEKMRDKNKDLAENPVVTDVKAVKLMTIHGSKGLEFPIVFLIDAEHGFNTMDEKGRYVLDRDAGMGITLKDFIHRLEIDTVQKNWIISIKKQKALAEKLRVLYVALTRAEQKLIITGAVNSADDTLNKWAEAVDTDETLIPAEARSKVSNFLDWIGMAIMRVPSVVEKYADYNTRKLQGTLIPDVELKIINSSELMDQQGLTALKSAQIPELQQLNAFDDIADVDKFKQIMNFKYHDEAATTTTAYQSVSEIKRVFDDPDKFELNFSEVDADQHIKPQNRFVTESLMAPRFMNEATKPKAAEIGTATHLILQQLDLNQPINETIIKDKIGELVMNRVLDEQVANRIRISTILDFFDSDLGQLMINHPENVHREEAFSLLLPAKGLFPKVKGDDDVLIHGIIDAYFEMEDRVILLDYKTDFVLPGSVEQGIEKVINRYQGQVNLYAQALGSILKRPVNEKYLYLLSIGRLVEIQ</sequence>
<gene>
    <name evidence="1" type="primary">addA</name>
    <name type="ordered locus">PEPE_1832</name>
</gene>
<evidence type="ECO:0000255" key="1">
    <source>
        <dbReference type="HAMAP-Rule" id="MF_01451"/>
    </source>
</evidence>
<name>ADDA_PEDPA</name>
<comment type="function">
    <text evidence="1">The heterodimer acts as both an ATP-dependent DNA helicase and an ATP-dependent, dual-direction single-stranded exonuclease. Recognizes the chi site generating a DNA molecule suitable for the initiation of homologous recombination. The AddA nuclease domain is required for chi fragment generation; this subunit has the helicase and 3' -&gt; 5' nuclease activities.</text>
</comment>
<comment type="catalytic activity">
    <reaction evidence="1">
        <text>Couples ATP hydrolysis with the unwinding of duplex DNA by translocating in the 3'-5' direction.</text>
        <dbReference type="EC" id="5.6.2.4"/>
    </reaction>
</comment>
<comment type="catalytic activity">
    <reaction evidence="1">
        <text>ATP + H2O = ADP + phosphate + H(+)</text>
        <dbReference type="Rhea" id="RHEA:13065"/>
        <dbReference type="ChEBI" id="CHEBI:15377"/>
        <dbReference type="ChEBI" id="CHEBI:15378"/>
        <dbReference type="ChEBI" id="CHEBI:30616"/>
        <dbReference type="ChEBI" id="CHEBI:43474"/>
        <dbReference type="ChEBI" id="CHEBI:456216"/>
        <dbReference type="EC" id="5.6.2.4"/>
    </reaction>
</comment>
<comment type="cofactor">
    <cofactor evidence="1">
        <name>Mg(2+)</name>
        <dbReference type="ChEBI" id="CHEBI:18420"/>
    </cofactor>
</comment>
<comment type="subunit">
    <text evidence="1">Heterodimer of AddA and AddB/RexB.</text>
</comment>
<comment type="similarity">
    <text evidence="1">Belongs to the helicase family. AddA subfamily.</text>
</comment>
<organism>
    <name type="scientific">Pediococcus pentosaceus (strain ATCC 25745 / CCUG 21536 / LMG 10740 / 183-1w)</name>
    <dbReference type="NCBI Taxonomy" id="278197"/>
    <lineage>
        <taxon>Bacteria</taxon>
        <taxon>Bacillati</taxon>
        <taxon>Bacillota</taxon>
        <taxon>Bacilli</taxon>
        <taxon>Lactobacillales</taxon>
        <taxon>Lactobacillaceae</taxon>
        <taxon>Pediococcus</taxon>
    </lineage>
</organism>
<accession>Q03D71</accession>
<dbReference type="EC" id="3.1.-.-" evidence="1"/>
<dbReference type="EC" id="5.6.2.4" evidence="1"/>
<dbReference type="EMBL" id="CP000422">
    <property type="protein sequence ID" value="ABJ68851.1"/>
    <property type="molecule type" value="Genomic_DNA"/>
</dbReference>
<dbReference type="RefSeq" id="WP_011673918.1">
    <property type="nucleotide sequence ID" value="NC_008525.1"/>
</dbReference>
<dbReference type="SMR" id="Q03D71"/>
<dbReference type="STRING" id="278197.PEPE_1832"/>
<dbReference type="GeneID" id="33062088"/>
<dbReference type="KEGG" id="ppe:PEPE_1832"/>
<dbReference type="eggNOG" id="COG1074">
    <property type="taxonomic scope" value="Bacteria"/>
</dbReference>
<dbReference type="HOGENOM" id="CLU_001114_3_1_9"/>
<dbReference type="OrthoDB" id="9810135at2"/>
<dbReference type="Proteomes" id="UP000000773">
    <property type="component" value="Chromosome"/>
</dbReference>
<dbReference type="GO" id="GO:0005829">
    <property type="term" value="C:cytosol"/>
    <property type="evidence" value="ECO:0007669"/>
    <property type="project" value="TreeGrafter"/>
</dbReference>
<dbReference type="GO" id="GO:0033202">
    <property type="term" value="C:DNA helicase complex"/>
    <property type="evidence" value="ECO:0007669"/>
    <property type="project" value="TreeGrafter"/>
</dbReference>
<dbReference type="GO" id="GO:0043138">
    <property type="term" value="F:3'-5' DNA helicase activity"/>
    <property type="evidence" value="ECO:0007669"/>
    <property type="project" value="UniProtKB-UniRule"/>
</dbReference>
<dbReference type="GO" id="GO:0008408">
    <property type="term" value="F:3'-5' exonuclease activity"/>
    <property type="evidence" value="ECO:0007669"/>
    <property type="project" value="UniProtKB-UniRule"/>
</dbReference>
<dbReference type="GO" id="GO:0005524">
    <property type="term" value="F:ATP binding"/>
    <property type="evidence" value="ECO:0007669"/>
    <property type="project" value="UniProtKB-UniRule"/>
</dbReference>
<dbReference type="GO" id="GO:0016887">
    <property type="term" value="F:ATP hydrolysis activity"/>
    <property type="evidence" value="ECO:0007669"/>
    <property type="project" value="RHEA"/>
</dbReference>
<dbReference type="GO" id="GO:0003690">
    <property type="term" value="F:double-stranded DNA binding"/>
    <property type="evidence" value="ECO:0007669"/>
    <property type="project" value="UniProtKB-UniRule"/>
</dbReference>
<dbReference type="GO" id="GO:0000724">
    <property type="term" value="P:double-strand break repair via homologous recombination"/>
    <property type="evidence" value="ECO:0007669"/>
    <property type="project" value="UniProtKB-UniRule"/>
</dbReference>
<dbReference type="CDD" id="cd17932">
    <property type="entry name" value="DEXQc_UvrD"/>
    <property type="match status" value="1"/>
</dbReference>
<dbReference type="Gene3D" id="3.90.320.10">
    <property type="match status" value="1"/>
</dbReference>
<dbReference type="Gene3D" id="3.40.50.300">
    <property type="entry name" value="P-loop containing nucleotide triphosphate hydrolases"/>
    <property type="match status" value="4"/>
</dbReference>
<dbReference type="HAMAP" id="MF_01451">
    <property type="entry name" value="AddA"/>
    <property type="match status" value="1"/>
</dbReference>
<dbReference type="InterPro" id="IPR014152">
    <property type="entry name" value="AddA"/>
</dbReference>
<dbReference type="InterPro" id="IPR014017">
    <property type="entry name" value="DNA_helicase_UvrD-like_C"/>
</dbReference>
<dbReference type="InterPro" id="IPR000212">
    <property type="entry name" value="DNA_helicase_UvrD/REP"/>
</dbReference>
<dbReference type="InterPro" id="IPR027417">
    <property type="entry name" value="P-loop_NTPase"/>
</dbReference>
<dbReference type="InterPro" id="IPR011604">
    <property type="entry name" value="PDDEXK-like_dom_sf"/>
</dbReference>
<dbReference type="InterPro" id="IPR038726">
    <property type="entry name" value="PDDEXK_AddAB-type"/>
</dbReference>
<dbReference type="InterPro" id="IPR011335">
    <property type="entry name" value="Restrct_endonuc-II-like"/>
</dbReference>
<dbReference type="InterPro" id="IPR014016">
    <property type="entry name" value="UvrD-like_ATP-bd"/>
</dbReference>
<dbReference type="NCBIfam" id="TIGR02785">
    <property type="entry name" value="addA_Gpos"/>
    <property type="match status" value="1"/>
</dbReference>
<dbReference type="PANTHER" id="PTHR11070:SF48">
    <property type="entry name" value="ATP-DEPENDENT HELICASE_NUCLEASE SUBUNIT A"/>
    <property type="match status" value="1"/>
</dbReference>
<dbReference type="PANTHER" id="PTHR11070">
    <property type="entry name" value="UVRD / RECB / PCRA DNA HELICASE FAMILY MEMBER"/>
    <property type="match status" value="1"/>
</dbReference>
<dbReference type="Pfam" id="PF12705">
    <property type="entry name" value="PDDEXK_1"/>
    <property type="match status" value="1"/>
</dbReference>
<dbReference type="Pfam" id="PF00580">
    <property type="entry name" value="UvrD-helicase"/>
    <property type="match status" value="1"/>
</dbReference>
<dbReference type="Pfam" id="PF13361">
    <property type="entry name" value="UvrD_C"/>
    <property type="match status" value="1"/>
</dbReference>
<dbReference type="SUPFAM" id="SSF52540">
    <property type="entry name" value="P-loop containing nucleoside triphosphate hydrolases"/>
    <property type="match status" value="1"/>
</dbReference>
<dbReference type="SUPFAM" id="SSF52980">
    <property type="entry name" value="Restriction endonuclease-like"/>
    <property type="match status" value="1"/>
</dbReference>
<dbReference type="PROSITE" id="PS51198">
    <property type="entry name" value="UVRD_HELICASE_ATP_BIND"/>
    <property type="match status" value="1"/>
</dbReference>
<dbReference type="PROSITE" id="PS51217">
    <property type="entry name" value="UVRD_HELICASE_CTER"/>
    <property type="match status" value="1"/>
</dbReference>
<reference key="1">
    <citation type="journal article" date="2006" name="Proc. Natl. Acad. Sci. U.S.A.">
        <title>Comparative genomics of the lactic acid bacteria.</title>
        <authorList>
            <person name="Makarova K.S."/>
            <person name="Slesarev A."/>
            <person name="Wolf Y.I."/>
            <person name="Sorokin A."/>
            <person name="Mirkin B."/>
            <person name="Koonin E.V."/>
            <person name="Pavlov A."/>
            <person name="Pavlova N."/>
            <person name="Karamychev V."/>
            <person name="Polouchine N."/>
            <person name="Shakhova V."/>
            <person name="Grigoriev I."/>
            <person name="Lou Y."/>
            <person name="Rohksar D."/>
            <person name="Lucas S."/>
            <person name="Huang K."/>
            <person name="Goodstein D.M."/>
            <person name="Hawkins T."/>
            <person name="Plengvidhya V."/>
            <person name="Welker D."/>
            <person name="Hughes J."/>
            <person name="Goh Y."/>
            <person name="Benson A."/>
            <person name="Baldwin K."/>
            <person name="Lee J.-H."/>
            <person name="Diaz-Muniz I."/>
            <person name="Dosti B."/>
            <person name="Smeianov V."/>
            <person name="Wechter W."/>
            <person name="Barabote R."/>
            <person name="Lorca G."/>
            <person name="Altermann E."/>
            <person name="Barrangou R."/>
            <person name="Ganesan B."/>
            <person name="Xie Y."/>
            <person name="Rawsthorne H."/>
            <person name="Tamir D."/>
            <person name="Parker C."/>
            <person name="Breidt F."/>
            <person name="Broadbent J.R."/>
            <person name="Hutkins R."/>
            <person name="O'Sullivan D."/>
            <person name="Steele J."/>
            <person name="Unlu G."/>
            <person name="Saier M.H. Jr."/>
            <person name="Klaenhammer T."/>
            <person name="Richardson P."/>
            <person name="Kozyavkin S."/>
            <person name="Weimer B.C."/>
            <person name="Mills D.A."/>
        </authorList>
    </citation>
    <scope>NUCLEOTIDE SEQUENCE [LARGE SCALE GENOMIC DNA]</scope>
    <source>
        <strain>ATCC 25745 / CCUG 21536 / LMG 10740 / 183-1w</strain>
    </source>
</reference>
<proteinExistence type="inferred from homology"/>
<keyword id="KW-0067">ATP-binding</keyword>
<keyword id="KW-0227">DNA damage</keyword>
<keyword id="KW-0234">DNA repair</keyword>
<keyword id="KW-0238">DNA-binding</keyword>
<keyword id="KW-0269">Exonuclease</keyword>
<keyword id="KW-0347">Helicase</keyword>
<keyword id="KW-0378">Hydrolase</keyword>
<keyword id="KW-0413">Isomerase</keyword>
<keyword id="KW-0540">Nuclease</keyword>
<keyword id="KW-0547">Nucleotide-binding</keyword>
<protein>
    <recommendedName>
        <fullName evidence="1">ATP-dependent helicase/nuclease subunit A</fullName>
        <ecNumber evidence="1">3.1.-.-</ecNumber>
        <ecNumber evidence="1">5.6.2.4</ecNumber>
    </recommendedName>
    <alternativeName>
        <fullName evidence="1">ATP-dependent helicase/nuclease AddA</fullName>
    </alternativeName>
    <alternativeName>
        <fullName evidence="1">DNA 3'-5' helicase AddA</fullName>
    </alternativeName>
</protein>